<reference key="1">
    <citation type="journal article" date="2013" name="Mar. Drugs">
        <title>Evidence of accelerated evolution and ectodermal-specific expression of presumptive BDS toxin cDNAs from Anemonia viridis.</title>
        <authorList>
            <person name="Nicosia A."/>
            <person name="Maggio T."/>
            <person name="Mazzola S."/>
            <person name="Cuttitta A."/>
        </authorList>
    </citation>
    <scope>NUCLEOTIDE SEQUENCE [MRNA]</scope>
    <scope>3D-STRUCTURE MODELING</scope>
    <scope>TISSUE SPECIFICITY</scope>
</reference>
<proteinExistence type="evidence at transcript level"/>
<dbReference type="EMBL" id="FK725211">
    <property type="status" value="NOT_ANNOTATED_CDS"/>
    <property type="molecule type" value="mRNA"/>
</dbReference>
<dbReference type="SMR" id="P0DQN7"/>
<dbReference type="GO" id="GO:0005576">
    <property type="term" value="C:extracellular region"/>
    <property type="evidence" value="ECO:0007669"/>
    <property type="project" value="UniProtKB-SubCell"/>
</dbReference>
<dbReference type="GO" id="GO:0042151">
    <property type="term" value="C:nematocyst"/>
    <property type="evidence" value="ECO:0007669"/>
    <property type="project" value="UniProtKB-SubCell"/>
</dbReference>
<dbReference type="GO" id="GO:0008200">
    <property type="term" value="F:ion channel inhibitor activity"/>
    <property type="evidence" value="ECO:0007669"/>
    <property type="project" value="InterPro"/>
</dbReference>
<dbReference type="GO" id="GO:0015459">
    <property type="term" value="F:potassium channel regulator activity"/>
    <property type="evidence" value="ECO:0007669"/>
    <property type="project" value="UniProtKB-KW"/>
</dbReference>
<dbReference type="GO" id="GO:0090729">
    <property type="term" value="F:toxin activity"/>
    <property type="evidence" value="ECO:0007669"/>
    <property type="project" value="UniProtKB-KW"/>
</dbReference>
<dbReference type="GO" id="GO:0008217">
    <property type="term" value="P:regulation of blood pressure"/>
    <property type="evidence" value="ECO:0007669"/>
    <property type="project" value="UniProtKB-KW"/>
</dbReference>
<dbReference type="Gene3D" id="2.20.20.10">
    <property type="entry name" value="Anthopleurin-A"/>
    <property type="match status" value="1"/>
</dbReference>
<dbReference type="InterPro" id="IPR012414">
    <property type="entry name" value="BDS_K_chnl_tox"/>
</dbReference>
<dbReference type="InterPro" id="IPR023355">
    <property type="entry name" value="Myo_ane_neurotoxin_sf"/>
</dbReference>
<dbReference type="Pfam" id="PF07936">
    <property type="entry name" value="Defensin_4"/>
    <property type="match status" value="1"/>
</dbReference>
<dbReference type="SUPFAM" id="SSF57392">
    <property type="entry name" value="Defensin-like"/>
    <property type="match status" value="1"/>
</dbReference>
<protein>
    <recommendedName>
        <fullName evidence="5">Kappa-actitoxin-Avd4o</fullName>
        <shortName evidence="5">Kappa-AITX-Avd4o</shortName>
    </recommendedName>
    <alternativeName>
        <fullName evidence="4">Blood depressing substance 15</fullName>
        <shortName evidence="4">BDS-15</shortName>
    </alternativeName>
</protein>
<name>BDSF_ANEVI</name>
<organism>
    <name type="scientific">Anemonia viridis</name>
    <name type="common">Snakelocks anemone</name>
    <dbReference type="NCBI Taxonomy" id="51769"/>
    <lineage>
        <taxon>Eukaryota</taxon>
        <taxon>Metazoa</taxon>
        <taxon>Cnidaria</taxon>
        <taxon>Anthozoa</taxon>
        <taxon>Hexacorallia</taxon>
        <taxon>Actiniaria</taxon>
        <taxon>Actiniidae</taxon>
        <taxon>Anemonia</taxon>
    </lineage>
</organism>
<comment type="function">
    <text evidence="2">Blocks Kv3 voltage-gated potassium channels (By similarity). Reduces blood pressure (By similarity).</text>
</comment>
<comment type="subcellular location">
    <subcellularLocation>
        <location evidence="5">Secreted</location>
    </subcellularLocation>
    <subcellularLocation>
        <location evidence="5">Nematocyst</location>
    </subcellularLocation>
</comment>
<comment type="tissue specificity">
    <text evidence="6">Experimental results show no expression in the ectodermal tissue from the distal and proximal tentacles, body wall, and oral disk. Since paralogs are expressed in this tissue, an expression of this toxin in this tissue is probable. The negative results could be explained by the very low abundance of EST sequences.</text>
</comment>
<comment type="similarity">
    <text evidence="5">Belongs to the sea anemone type 3 (BDS) potassium channel toxin family.</text>
</comment>
<comment type="caution">
    <text evidence="5">Opinions are divided on whether Anemonia viridis (Forsskal, 1775) and Anemonia sulcata (Pennant, 1777) are separate species.</text>
</comment>
<feature type="signal peptide" evidence="3">
    <location>
        <begin position="1"/>
        <end position="19"/>
    </location>
</feature>
<feature type="propeptide" id="PRO_0000451606" evidence="1">
    <location>
        <begin position="20"/>
        <end position="33"/>
    </location>
</feature>
<feature type="chain" id="PRO_0000451607" description="Kappa-actitoxin-Avd4o">
    <location>
        <begin position="34"/>
        <end position="76"/>
    </location>
</feature>
<feature type="disulfide bond" evidence="1">
    <location>
        <begin position="37"/>
        <end position="72"/>
    </location>
</feature>
<feature type="disulfide bond" evidence="1">
    <location>
        <begin position="39"/>
        <end position="65"/>
    </location>
</feature>
<feature type="disulfide bond" evidence="1">
    <location>
        <begin position="55"/>
        <end position="73"/>
    </location>
</feature>
<accession>P0DQN7</accession>
<evidence type="ECO:0000250" key="1">
    <source>
        <dbReference type="UniProtKB" id="P0DMX9"/>
    </source>
</evidence>
<evidence type="ECO:0000250" key="2">
    <source>
        <dbReference type="UniProtKB" id="P11494"/>
    </source>
</evidence>
<evidence type="ECO:0000255" key="3"/>
<evidence type="ECO:0000303" key="4">
    <source>
    </source>
</evidence>
<evidence type="ECO:0000305" key="5"/>
<evidence type="ECO:0000305" key="6">
    <source>
    </source>
</evidence>
<keyword id="KW-1015">Disulfide bond</keyword>
<keyword id="KW-0382">Hypotensive agent</keyword>
<keyword id="KW-0872">Ion channel impairing toxin</keyword>
<keyword id="KW-0166">Nematocyst</keyword>
<keyword id="KW-0632">Potassium channel impairing toxin</keyword>
<keyword id="KW-0964">Secreted</keyword>
<keyword id="KW-0732">Signal</keyword>
<keyword id="KW-0800">Toxin</keyword>
<keyword id="KW-1220">Voltage-gated potassium channel impairing toxin</keyword>
<sequence length="76" mass="8318">MNKALFLSLVVLCAAVVFAAEDLQKAKHAPFKLAAPCFCSGKPGRGDLWIFRGTCPGGYGYTSNCYKWPNICCYPH</sequence>